<dbReference type="EMBL" id="D50453">
    <property type="protein sequence ID" value="BAA08958.1"/>
    <property type="molecule type" value="Genomic_DNA"/>
</dbReference>
<dbReference type="EMBL" id="AL009126">
    <property type="protein sequence ID" value="CAB12118.1"/>
    <property type="molecule type" value="Genomic_DNA"/>
</dbReference>
<dbReference type="PIR" id="D69759">
    <property type="entry name" value="D69759"/>
</dbReference>
<dbReference type="RefSeq" id="NP_388206.1">
    <property type="nucleotide sequence ID" value="NC_000964.3"/>
</dbReference>
<dbReference type="RefSeq" id="WP_003234649.1">
    <property type="nucleotide sequence ID" value="NZ_OZ025638.1"/>
</dbReference>
<dbReference type="FunCoup" id="P94394">
    <property type="interactions" value="136"/>
</dbReference>
<dbReference type="STRING" id="224308.BSU03240"/>
<dbReference type="PaxDb" id="224308-BSU03240"/>
<dbReference type="EnsemblBacteria" id="CAB12118">
    <property type="protein sequence ID" value="CAB12118"/>
    <property type="gene ID" value="BSU_03240"/>
</dbReference>
<dbReference type="GeneID" id="938334"/>
<dbReference type="KEGG" id="bsu:BSU03240"/>
<dbReference type="PATRIC" id="fig|224308.179.peg.338"/>
<dbReference type="eggNOG" id="COG3689">
    <property type="taxonomic scope" value="Bacteria"/>
</dbReference>
<dbReference type="InParanoid" id="P94394"/>
<dbReference type="OrthoDB" id="9770408at2"/>
<dbReference type="PhylomeDB" id="P94394"/>
<dbReference type="BioCyc" id="BSUB:BSU03240-MONOMER"/>
<dbReference type="Proteomes" id="UP000001570">
    <property type="component" value="Chromosome"/>
</dbReference>
<dbReference type="GO" id="GO:0005886">
    <property type="term" value="C:plasma membrane"/>
    <property type="evidence" value="ECO:0007669"/>
    <property type="project" value="UniProtKB-SubCell"/>
</dbReference>
<dbReference type="InterPro" id="IPR015402">
    <property type="entry name" value="DUF1980"/>
</dbReference>
<dbReference type="InterPro" id="IPR048447">
    <property type="entry name" value="DUF1980_C"/>
</dbReference>
<dbReference type="InterPro" id="IPR048493">
    <property type="entry name" value="DUF1980_N"/>
</dbReference>
<dbReference type="InterPro" id="IPR052955">
    <property type="entry name" value="UPF0703_membrane_permease"/>
</dbReference>
<dbReference type="NCBIfam" id="TIGR03943">
    <property type="entry name" value="TIGR03943 family putative permease subunit"/>
    <property type="match status" value="1"/>
</dbReference>
<dbReference type="PANTHER" id="PTHR40047">
    <property type="entry name" value="UPF0703 PROTEIN YCGQ"/>
    <property type="match status" value="1"/>
</dbReference>
<dbReference type="PANTHER" id="PTHR40047:SF1">
    <property type="entry name" value="UPF0703 PROTEIN YCGQ"/>
    <property type="match status" value="1"/>
</dbReference>
<dbReference type="Pfam" id="PF09323">
    <property type="entry name" value="DUF1980"/>
    <property type="match status" value="1"/>
</dbReference>
<dbReference type="Pfam" id="PF21537">
    <property type="entry name" value="DUF1980_C"/>
    <property type="match status" value="1"/>
</dbReference>
<accession>P94394</accession>
<accession>Q797Q3</accession>
<gene>
    <name type="primary">ycgQ</name>
    <name type="ordered locus">BSU03240</name>
</gene>
<protein>
    <recommendedName>
        <fullName>UPF0703 protein YcgQ</fullName>
    </recommendedName>
</protein>
<reference key="1">
    <citation type="journal article" date="1996" name="Microbiology">
        <title>The 25 degrees-36 degrees region of the Bacillus subtilis chromosome: determination of the sequence of a 146 kb segment and identification of 113 genes.</title>
        <authorList>
            <person name="Yamane K."/>
            <person name="Kumano M."/>
            <person name="Kurita K."/>
        </authorList>
    </citation>
    <scope>NUCLEOTIDE SEQUENCE [GENOMIC DNA]</scope>
    <source>
        <strain>168</strain>
    </source>
</reference>
<reference key="2">
    <citation type="journal article" date="1997" name="Nature">
        <title>The complete genome sequence of the Gram-positive bacterium Bacillus subtilis.</title>
        <authorList>
            <person name="Kunst F."/>
            <person name="Ogasawara N."/>
            <person name="Moszer I."/>
            <person name="Albertini A.M."/>
            <person name="Alloni G."/>
            <person name="Azevedo V."/>
            <person name="Bertero M.G."/>
            <person name="Bessieres P."/>
            <person name="Bolotin A."/>
            <person name="Borchert S."/>
            <person name="Borriss R."/>
            <person name="Boursier L."/>
            <person name="Brans A."/>
            <person name="Braun M."/>
            <person name="Brignell S.C."/>
            <person name="Bron S."/>
            <person name="Brouillet S."/>
            <person name="Bruschi C.V."/>
            <person name="Caldwell B."/>
            <person name="Capuano V."/>
            <person name="Carter N.M."/>
            <person name="Choi S.-K."/>
            <person name="Codani J.-J."/>
            <person name="Connerton I.F."/>
            <person name="Cummings N.J."/>
            <person name="Daniel R.A."/>
            <person name="Denizot F."/>
            <person name="Devine K.M."/>
            <person name="Duesterhoeft A."/>
            <person name="Ehrlich S.D."/>
            <person name="Emmerson P.T."/>
            <person name="Entian K.-D."/>
            <person name="Errington J."/>
            <person name="Fabret C."/>
            <person name="Ferrari E."/>
            <person name="Foulger D."/>
            <person name="Fritz C."/>
            <person name="Fujita M."/>
            <person name="Fujita Y."/>
            <person name="Fuma S."/>
            <person name="Galizzi A."/>
            <person name="Galleron N."/>
            <person name="Ghim S.-Y."/>
            <person name="Glaser P."/>
            <person name="Goffeau A."/>
            <person name="Golightly E.J."/>
            <person name="Grandi G."/>
            <person name="Guiseppi G."/>
            <person name="Guy B.J."/>
            <person name="Haga K."/>
            <person name="Haiech J."/>
            <person name="Harwood C.R."/>
            <person name="Henaut A."/>
            <person name="Hilbert H."/>
            <person name="Holsappel S."/>
            <person name="Hosono S."/>
            <person name="Hullo M.-F."/>
            <person name="Itaya M."/>
            <person name="Jones L.-M."/>
            <person name="Joris B."/>
            <person name="Karamata D."/>
            <person name="Kasahara Y."/>
            <person name="Klaerr-Blanchard M."/>
            <person name="Klein C."/>
            <person name="Kobayashi Y."/>
            <person name="Koetter P."/>
            <person name="Koningstein G."/>
            <person name="Krogh S."/>
            <person name="Kumano M."/>
            <person name="Kurita K."/>
            <person name="Lapidus A."/>
            <person name="Lardinois S."/>
            <person name="Lauber J."/>
            <person name="Lazarevic V."/>
            <person name="Lee S.-M."/>
            <person name="Levine A."/>
            <person name="Liu H."/>
            <person name="Masuda S."/>
            <person name="Mauel C."/>
            <person name="Medigue C."/>
            <person name="Medina N."/>
            <person name="Mellado R.P."/>
            <person name="Mizuno M."/>
            <person name="Moestl D."/>
            <person name="Nakai S."/>
            <person name="Noback M."/>
            <person name="Noone D."/>
            <person name="O'Reilly M."/>
            <person name="Ogawa K."/>
            <person name="Ogiwara A."/>
            <person name="Oudega B."/>
            <person name="Park S.-H."/>
            <person name="Parro V."/>
            <person name="Pohl T.M."/>
            <person name="Portetelle D."/>
            <person name="Porwollik S."/>
            <person name="Prescott A.M."/>
            <person name="Presecan E."/>
            <person name="Pujic P."/>
            <person name="Purnelle B."/>
            <person name="Rapoport G."/>
            <person name="Rey M."/>
            <person name="Reynolds S."/>
            <person name="Rieger M."/>
            <person name="Rivolta C."/>
            <person name="Rocha E."/>
            <person name="Roche B."/>
            <person name="Rose M."/>
            <person name="Sadaie Y."/>
            <person name="Sato T."/>
            <person name="Scanlan E."/>
            <person name="Schleich S."/>
            <person name="Schroeter R."/>
            <person name="Scoffone F."/>
            <person name="Sekiguchi J."/>
            <person name="Sekowska A."/>
            <person name="Seror S.J."/>
            <person name="Serror P."/>
            <person name="Shin B.-S."/>
            <person name="Soldo B."/>
            <person name="Sorokin A."/>
            <person name="Tacconi E."/>
            <person name="Takagi T."/>
            <person name="Takahashi H."/>
            <person name="Takemaru K."/>
            <person name="Takeuchi M."/>
            <person name="Tamakoshi A."/>
            <person name="Tanaka T."/>
            <person name="Terpstra P."/>
            <person name="Tognoni A."/>
            <person name="Tosato V."/>
            <person name="Uchiyama S."/>
            <person name="Vandenbol M."/>
            <person name="Vannier F."/>
            <person name="Vassarotti A."/>
            <person name="Viari A."/>
            <person name="Wambutt R."/>
            <person name="Wedler E."/>
            <person name="Wedler H."/>
            <person name="Weitzenegger T."/>
            <person name="Winters P."/>
            <person name="Wipat A."/>
            <person name="Yamamoto H."/>
            <person name="Yamane K."/>
            <person name="Yasumoto K."/>
            <person name="Yata K."/>
            <person name="Yoshida K."/>
            <person name="Yoshikawa H.-F."/>
            <person name="Zumstein E."/>
            <person name="Yoshikawa H."/>
            <person name="Danchin A."/>
        </authorList>
    </citation>
    <scope>NUCLEOTIDE SEQUENCE [LARGE SCALE GENOMIC DNA]</scope>
    <source>
        <strain>168</strain>
    </source>
</reference>
<comment type="subcellular location">
    <subcellularLocation>
        <location evidence="2">Cell membrane</location>
        <topology evidence="2">Multi-pass membrane protein</topology>
    </subcellularLocation>
</comment>
<comment type="similarity">
    <text evidence="2">Belongs to the UPF0703 family.</text>
</comment>
<evidence type="ECO:0000255" key="1"/>
<evidence type="ECO:0000305" key="2"/>
<sequence>MFRLLVLMGFTFFFYHLHASGNLTKYINMKYAYLSFIAIFLLAILTAVQAYLFIKSPEKSGHHHDHDCGCGHDHEHDHEQNKPFYQRYLIYVVFLFPLVSGIFFPIATLDSSIVKTKGFSFKAMESGDHYSQTQYLRPDASLYYAQDSYDKQMKQLFNKYSSKKEISLTDDDFLKGMETIYNYPGEFLGRTIEFHGFAYKGNAINKNQLFVLRFGIIHCIADSGVYGMLVEFPKDMDIKDDEWIHIKGTLASEYYQPFKSTLPVVKVTDWNTIKKPDDPYVYRGF</sequence>
<name>YCGQ_BACSU</name>
<feature type="chain" id="PRO_0000360060" description="UPF0703 protein YcgQ">
    <location>
        <begin position="1"/>
        <end position="285"/>
    </location>
</feature>
<feature type="transmembrane region" description="Helical" evidence="1">
    <location>
        <begin position="4"/>
        <end position="24"/>
    </location>
</feature>
<feature type="transmembrane region" description="Helical" evidence="1">
    <location>
        <begin position="34"/>
        <end position="54"/>
    </location>
</feature>
<feature type="transmembrane region" description="Helical" evidence="1">
    <location>
        <begin position="89"/>
        <end position="109"/>
    </location>
</feature>
<feature type="transmembrane region" description="Helical" evidence="1">
    <location>
        <begin position="210"/>
        <end position="230"/>
    </location>
</feature>
<organism>
    <name type="scientific">Bacillus subtilis (strain 168)</name>
    <dbReference type="NCBI Taxonomy" id="224308"/>
    <lineage>
        <taxon>Bacteria</taxon>
        <taxon>Bacillati</taxon>
        <taxon>Bacillota</taxon>
        <taxon>Bacilli</taxon>
        <taxon>Bacillales</taxon>
        <taxon>Bacillaceae</taxon>
        <taxon>Bacillus</taxon>
    </lineage>
</organism>
<keyword id="KW-1003">Cell membrane</keyword>
<keyword id="KW-0472">Membrane</keyword>
<keyword id="KW-1185">Reference proteome</keyword>
<keyword id="KW-0812">Transmembrane</keyword>
<keyword id="KW-1133">Transmembrane helix</keyword>
<proteinExistence type="inferred from homology"/>